<gene>
    <name evidence="1" type="primary">pepA</name>
    <name type="ordered locus">DIP1637</name>
</gene>
<sequence>MSAQFSLPATGLATQLELSKKLPEDIDALVVPTFKGEDGLELAASGLFDENLEIAIWDLLVAVGATGKQGEVVRIPSIEGIEVDFIVGVGLGDNDSLDDDTLRRAAGDAARSLAGVQHVATTLGAFGLQPAVEGFALGAYNYTGVRSKQKKPLPLEKVTFISLGDKKAAKEEFTVGQIIAESVALCRDLVNAPSSHLYPESYAAIIRDTAEKIGLGVEILDEKKLEKQGFGGILAVGTGSSRKPRLVRLTWAPKKAKKSIALVGKGITFDTGGISLKPGAGMDDMISDMGGSATMVATIIAAARLGVKLNVTATIPLAENMPGGNAFRPGDVITHYGGITSEILNTDAEGRLVLADAIARASEDKPDYLLNVATLTGAQIVALGDRTSGVMGSDEFRDSVALTGRTVGEPAWAMPLPEEIGEDVKSPVADIRNVTGSRSGGMMAAGWYLSHFVGEGIEWAHVDIAGPAYNKAGVYGYIPKRATGVPVRTFVQVLSNLAEQ</sequence>
<dbReference type="EC" id="3.4.11.1" evidence="1"/>
<dbReference type="EC" id="3.4.11.10" evidence="1"/>
<dbReference type="EMBL" id="BX248358">
    <property type="protein sequence ID" value="CAE50162.1"/>
    <property type="molecule type" value="Genomic_DNA"/>
</dbReference>
<dbReference type="RefSeq" id="WP_010935213.1">
    <property type="nucleotide sequence ID" value="NC_002935.2"/>
</dbReference>
<dbReference type="SMR" id="Q6NG90"/>
<dbReference type="STRING" id="257309.DIP1637"/>
<dbReference type="KEGG" id="cdi:DIP1637"/>
<dbReference type="HOGENOM" id="CLU_013734_2_2_11"/>
<dbReference type="Proteomes" id="UP000002198">
    <property type="component" value="Chromosome"/>
</dbReference>
<dbReference type="GO" id="GO:0005737">
    <property type="term" value="C:cytoplasm"/>
    <property type="evidence" value="ECO:0007669"/>
    <property type="project" value="UniProtKB-SubCell"/>
</dbReference>
<dbReference type="GO" id="GO:0030145">
    <property type="term" value="F:manganese ion binding"/>
    <property type="evidence" value="ECO:0007669"/>
    <property type="project" value="UniProtKB-UniRule"/>
</dbReference>
<dbReference type="GO" id="GO:0070006">
    <property type="term" value="F:metalloaminopeptidase activity"/>
    <property type="evidence" value="ECO:0007669"/>
    <property type="project" value="InterPro"/>
</dbReference>
<dbReference type="GO" id="GO:0006508">
    <property type="term" value="P:proteolysis"/>
    <property type="evidence" value="ECO:0007669"/>
    <property type="project" value="UniProtKB-KW"/>
</dbReference>
<dbReference type="CDD" id="cd00433">
    <property type="entry name" value="Peptidase_M17"/>
    <property type="match status" value="1"/>
</dbReference>
<dbReference type="Gene3D" id="3.40.220.10">
    <property type="entry name" value="Leucine Aminopeptidase, subunit E, domain 1"/>
    <property type="match status" value="1"/>
</dbReference>
<dbReference type="Gene3D" id="3.40.630.10">
    <property type="entry name" value="Zn peptidases"/>
    <property type="match status" value="1"/>
</dbReference>
<dbReference type="HAMAP" id="MF_00181">
    <property type="entry name" value="Cytosol_peptidase_M17"/>
    <property type="match status" value="1"/>
</dbReference>
<dbReference type="InterPro" id="IPR011356">
    <property type="entry name" value="Leucine_aapep/pepB"/>
</dbReference>
<dbReference type="InterPro" id="IPR043472">
    <property type="entry name" value="Macro_dom-like"/>
</dbReference>
<dbReference type="InterPro" id="IPR000819">
    <property type="entry name" value="Peptidase_M17_C"/>
</dbReference>
<dbReference type="InterPro" id="IPR023042">
    <property type="entry name" value="Peptidase_M17_leu_NH2_pept"/>
</dbReference>
<dbReference type="InterPro" id="IPR008283">
    <property type="entry name" value="Peptidase_M17_N"/>
</dbReference>
<dbReference type="NCBIfam" id="NF002073">
    <property type="entry name" value="PRK00913.1-2"/>
    <property type="match status" value="1"/>
</dbReference>
<dbReference type="PANTHER" id="PTHR11963:SF23">
    <property type="entry name" value="CYTOSOL AMINOPEPTIDASE"/>
    <property type="match status" value="1"/>
</dbReference>
<dbReference type="PANTHER" id="PTHR11963">
    <property type="entry name" value="LEUCINE AMINOPEPTIDASE-RELATED"/>
    <property type="match status" value="1"/>
</dbReference>
<dbReference type="Pfam" id="PF00883">
    <property type="entry name" value="Peptidase_M17"/>
    <property type="match status" value="1"/>
</dbReference>
<dbReference type="Pfam" id="PF02789">
    <property type="entry name" value="Peptidase_M17_N"/>
    <property type="match status" value="1"/>
</dbReference>
<dbReference type="PRINTS" id="PR00481">
    <property type="entry name" value="LAMNOPPTDASE"/>
</dbReference>
<dbReference type="SUPFAM" id="SSF52949">
    <property type="entry name" value="Macro domain-like"/>
    <property type="match status" value="1"/>
</dbReference>
<dbReference type="SUPFAM" id="SSF53187">
    <property type="entry name" value="Zn-dependent exopeptidases"/>
    <property type="match status" value="1"/>
</dbReference>
<dbReference type="PROSITE" id="PS00631">
    <property type="entry name" value="CYTOSOL_AP"/>
    <property type="match status" value="1"/>
</dbReference>
<reference key="1">
    <citation type="journal article" date="2003" name="Nucleic Acids Res.">
        <title>The complete genome sequence and analysis of Corynebacterium diphtheriae NCTC13129.</title>
        <authorList>
            <person name="Cerdeno-Tarraga A.-M."/>
            <person name="Efstratiou A."/>
            <person name="Dover L.G."/>
            <person name="Holden M.T.G."/>
            <person name="Pallen M.J."/>
            <person name="Bentley S.D."/>
            <person name="Besra G.S."/>
            <person name="Churcher C.M."/>
            <person name="James K.D."/>
            <person name="De Zoysa A."/>
            <person name="Chillingworth T."/>
            <person name="Cronin A."/>
            <person name="Dowd L."/>
            <person name="Feltwell T."/>
            <person name="Hamlin N."/>
            <person name="Holroyd S."/>
            <person name="Jagels K."/>
            <person name="Moule S."/>
            <person name="Quail M.A."/>
            <person name="Rabbinowitsch E."/>
            <person name="Rutherford K.M."/>
            <person name="Thomson N.R."/>
            <person name="Unwin L."/>
            <person name="Whitehead S."/>
            <person name="Barrell B.G."/>
            <person name="Parkhill J."/>
        </authorList>
    </citation>
    <scope>NUCLEOTIDE SEQUENCE [LARGE SCALE GENOMIC DNA]</scope>
    <source>
        <strain>ATCC 700971 / NCTC 13129 / Biotype gravis</strain>
    </source>
</reference>
<evidence type="ECO:0000255" key="1">
    <source>
        <dbReference type="HAMAP-Rule" id="MF_00181"/>
    </source>
</evidence>
<protein>
    <recommendedName>
        <fullName evidence="1">Probable cytosol aminopeptidase</fullName>
        <ecNumber evidence="1">3.4.11.1</ecNumber>
    </recommendedName>
    <alternativeName>
        <fullName evidence="1">Leucine aminopeptidase</fullName>
        <shortName evidence="1">LAP</shortName>
        <ecNumber evidence="1">3.4.11.10</ecNumber>
    </alternativeName>
    <alternativeName>
        <fullName evidence="1">Leucyl aminopeptidase</fullName>
    </alternativeName>
</protein>
<name>AMPA_CORDI</name>
<accession>Q6NG90</accession>
<comment type="function">
    <text evidence="1">Presumably involved in the processing and regular turnover of intracellular proteins. Catalyzes the removal of unsubstituted N-terminal amino acids from various peptides.</text>
</comment>
<comment type="catalytic activity">
    <reaction evidence="1">
        <text>Release of an N-terminal amino acid, Xaa-|-Yaa-, in which Xaa is preferably Leu, but may be other amino acids including Pro although not Arg or Lys, and Yaa may be Pro. Amino acid amides and methyl esters are also readily hydrolyzed, but rates on arylamides are exceedingly low.</text>
        <dbReference type="EC" id="3.4.11.1"/>
    </reaction>
</comment>
<comment type="catalytic activity">
    <reaction evidence="1">
        <text>Release of an N-terminal amino acid, preferentially leucine, but not glutamic or aspartic acids.</text>
        <dbReference type="EC" id="3.4.11.10"/>
    </reaction>
</comment>
<comment type="cofactor">
    <cofactor evidence="1">
        <name>Mn(2+)</name>
        <dbReference type="ChEBI" id="CHEBI:29035"/>
    </cofactor>
    <text evidence="1">Binds 2 manganese ions per subunit.</text>
</comment>
<comment type="subcellular location">
    <subcellularLocation>
        <location evidence="1">Cytoplasm</location>
    </subcellularLocation>
</comment>
<comment type="similarity">
    <text evidence="1">Belongs to the peptidase M17 family.</text>
</comment>
<keyword id="KW-0031">Aminopeptidase</keyword>
<keyword id="KW-0963">Cytoplasm</keyword>
<keyword id="KW-0378">Hydrolase</keyword>
<keyword id="KW-0464">Manganese</keyword>
<keyword id="KW-0479">Metal-binding</keyword>
<keyword id="KW-0645">Protease</keyword>
<keyword id="KW-1185">Reference proteome</keyword>
<feature type="chain" id="PRO_0000165745" description="Probable cytosol aminopeptidase">
    <location>
        <begin position="1"/>
        <end position="500"/>
    </location>
</feature>
<feature type="active site" evidence="1">
    <location>
        <position position="277"/>
    </location>
</feature>
<feature type="active site" evidence="1">
    <location>
        <position position="351"/>
    </location>
</feature>
<feature type="binding site" evidence="1">
    <location>
        <position position="265"/>
    </location>
    <ligand>
        <name>Mn(2+)</name>
        <dbReference type="ChEBI" id="CHEBI:29035"/>
        <label>2</label>
    </ligand>
</feature>
<feature type="binding site" evidence="1">
    <location>
        <position position="270"/>
    </location>
    <ligand>
        <name>Mn(2+)</name>
        <dbReference type="ChEBI" id="CHEBI:29035"/>
        <label>1</label>
    </ligand>
</feature>
<feature type="binding site" evidence="1">
    <location>
        <position position="270"/>
    </location>
    <ligand>
        <name>Mn(2+)</name>
        <dbReference type="ChEBI" id="CHEBI:29035"/>
        <label>2</label>
    </ligand>
</feature>
<feature type="binding site" evidence="1">
    <location>
        <position position="288"/>
    </location>
    <ligand>
        <name>Mn(2+)</name>
        <dbReference type="ChEBI" id="CHEBI:29035"/>
        <label>2</label>
    </ligand>
</feature>
<feature type="binding site" evidence="1">
    <location>
        <position position="347"/>
    </location>
    <ligand>
        <name>Mn(2+)</name>
        <dbReference type="ChEBI" id="CHEBI:29035"/>
        <label>1</label>
    </ligand>
</feature>
<feature type="binding site" evidence="1">
    <location>
        <position position="349"/>
    </location>
    <ligand>
        <name>Mn(2+)</name>
        <dbReference type="ChEBI" id="CHEBI:29035"/>
        <label>1</label>
    </ligand>
</feature>
<feature type="binding site" evidence="1">
    <location>
        <position position="349"/>
    </location>
    <ligand>
        <name>Mn(2+)</name>
        <dbReference type="ChEBI" id="CHEBI:29035"/>
        <label>2</label>
    </ligand>
</feature>
<organism>
    <name type="scientific">Corynebacterium diphtheriae (strain ATCC 700971 / NCTC 13129 / Biotype gravis)</name>
    <dbReference type="NCBI Taxonomy" id="257309"/>
    <lineage>
        <taxon>Bacteria</taxon>
        <taxon>Bacillati</taxon>
        <taxon>Actinomycetota</taxon>
        <taxon>Actinomycetes</taxon>
        <taxon>Mycobacteriales</taxon>
        <taxon>Corynebacteriaceae</taxon>
        <taxon>Corynebacterium</taxon>
    </lineage>
</organism>
<proteinExistence type="inferred from homology"/>